<dbReference type="EMBL" id="AE005674">
    <property type="protein sequence ID" value="AAN42618.1"/>
    <property type="molecule type" value="Genomic_DNA"/>
</dbReference>
<dbReference type="EMBL" id="AE014073">
    <property type="protein sequence ID" value="AAP16502.1"/>
    <property type="molecule type" value="Genomic_DNA"/>
</dbReference>
<dbReference type="RefSeq" id="NP_706911.1">
    <property type="nucleotide sequence ID" value="NC_004337.2"/>
</dbReference>
<dbReference type="RefSeq" id="WP_000087763.1">
    <property type="nucleotide sequence ID" value="NZ_WPGW01000043.1"/>
</dbReference>
<dbReference type="SMR" id="P0A985"/>
<dbReference type="STRING" id="198214.SF0990"/>
<dbReference type="PaxDb" id="198214-SF0990"/>
<dbReference type="GeneID" id="1023928"/>
<dbReference type="GeneID" id="93776424"/>
<dbReference type="KEGG" id="sfl:SF0990"/>
<dbReference type="KEGG" id="sfx:S1057"/>
<dbReference type="PATRIC" id="fig|198214.7.peg.1151"/>
<dbReference type="HOGENOM" id="CLU_117621_2_1_6"/>
<dbReference type="Proteomes" id="UP000001006">
    <property type="component" value="Chromosome"/>
</dbReference>
<dbReference type="Proteomes" id="UP000002673">
    <property type="component" value="Chromosome"/>
</dbReference>
<dbReference type="GO" id="GO:0005829">
    <property type="term" value="C:cytosol"/>
    <property type="evidence" value="ECO:0007669"/>
    <property type="project" value="UniProtKB-ARBA"/>
</dbReference>
<dbReference type="GO" id="GO:0003677">
    <property type="term" value="F:DNA binding"/>
    <property type="evidence" value="ECO:0007669"/>
    <property type="project" value="UniProtKB-KW"/>
</dbReference>
<dbReference type="CDD" id="cd04458">
    <property type="entry name" value="CSP_CDS"/>
    <property type="match status" value="1"/>
</dbReference>
<dbReference type="Gene3D" id="2.40.50.140">
    <property type="entry name" value="Nucleic acid-binding proteins"/>
    <property type="match status" value="1"/>
</dbReference>
<dbReference type="InterPro" id="IPR012156">
    <property type="entry name" value="Cold_shock_CspA"/>
</dbReference>
<dbReference type="InterPro" id="IPR050181">
    <property type="entry name" value="Cold_shock_domain"/>
</dbReference>
<dbReference type="InterPro" id="IPR011129">
    <property type="entry name" value="CSD"/>
</dbReference>
<dbReference type="InterPro" id="IPR019844">
    <property type="entry name" value="CSD_CS"/>
</dbReference>
<dbReference type="InterPro" id="IPR002059">
    <property type="entry name" value="CSP_DNA-bd"/>
</dbReference>
<dbReference type="InterPro" id="IPR012340">
    <property type="entry name" value="NA-bd_OB-fold"/>
</dbReference>
<dbReference type="NCBIfam" id="NF012007">
    <property type="entry name" value="PRK15463.1"/>
    <property type="match status" value="1"/>
</dbReference>
<dbReference type="NCBIfam" id="NF012008">
    <property type="entry name" value="PRK15464.1"/>
    <property type="match status" value="1"/>
</dbReference>
<dbReference type="PANTHER" id="PTHR11544">
    <property type="entry name" value="COLD SHOCK DOMAIN CONTAINING PROTEINS"/>
    <property type="match status" value="1"/>
</dbReference>
<dbReference type="Pfam" id="PF00313">
    <property type="entry name" value="CSD"/>
    <property type="match status" value="1"/>
</dbReference>
<dbReference type="PIRSF" id="PIRSF002599">
    <property type="entry name" value="Cold_shock_A"/>
    <property type="match status" value="1"/>
</dbReference>
<dbReference type="SMART" id="SM00357">
    <property type="entry name" value="CSP"/>
    <property type="match status" value="1"/>
</dbReference>
<dbReference type="SUPFAM" id="SSF50249">
    <property type="entry name" value="Nucleic acid-binding proteins"/>
    <property type="match status" value="1"/>
</dbReference>
<dbReference type="PROSITE" id="PS00352">
    <property type="entry name" value="CSD_1"/>
    <property type="match status" value="1"/>
</dbReference>
<dbReference type="PROSITE" id="PS51857">
    <property type="entry name" value="CSD_2"/>
    <property type="match status" value="1"/>
</dbReference>
<accession>P0A985</accession>
<accession>P56253</accession>
<accession>Q9R3K1</accession>
<evidence type="ECO:0000250" key="1"/>
<gene>
    <name type="primary">cspH</name>
    <name type="ordered locus">SF0990</name>
    <name type="ordered locus">S1057</name>
</gene>
<reference key="1">
    <citation type="journal article" date="2002" name="Nucleic Acids Res.">
        <title>Genome sequence of Shigella flexneri 2a: insights into pathogenicity through comparison with genomes of Escherichia coli K12 and O157.</title>
        <authorList>
            <person name="Jin Q."/>
            <person name="Yuan Z."/>
            <person name="Xu J."/>
            <person name="Wang Y."/>
            <person name="Shen Y."/>
            <person name="Lu W."/>
            <person name="Wang J."/>
            <person name="Liu H."/>
            <person name="Yang J."/>
            <person name="Yang F."/>
            <person name="Zhang X."/>
            <person name="Zhang J."/>
            <person name="Yang G."/>
            <person name="Wu H."/>
            <person name="Qu D."/>
            <person name="Dong J."/>
            <person name="Sun L."/>
            <person name="Xue Y."/>
            <person name="Zhao A."/>
            <person name="Gao Y."/>
            <person name="Zhu J."/>
            <person name="Kan B."/>
            <person name="Ding K."/>
            <person name="Chen S."/>
            <person name="Cheng H."/>
            <person name="Yao Z."/>
            <person name="He B."/>
            <person name="Chen R."/>
            <person name="Ma D."/>
            <person name="Qiang B."/>
            <person name="Wen Y."/>
            <person name="Hou Y."/>
            <person name="Yu J."/>
        </authorList>
    </citation>
    <scope>NUCLEOTIDE SEQUENCE [LARGE SCALE GENOMIC DNA]</scope>
    <source>
        <strain>301 / Serotype 2a</strain>
    </source>
</reference>
<reference key="2">
    <citation type="journal article" date="2003" name="Infect. Immun.">
        <title>Complete genome sequence and comparative genomics of Shigella flexneri serotype 2a strain 2457T.</title>
        <authorList>
            <person name="Wei J."/>
            <person name="Goldberg M.B."/>
            <person name="Burland V."/>
            <person name="Venkatesan M.M."/>
            <person name="Deng W."/>
            <person name="Fournier G."/>
            <person name="Mayhew G.F."/>
            <person name="Plunkett G. III"/>
            <person name="Rose D.J."/>
            <person name="Darling A."/>
            <person name="Mau B."/>
            <person name="Perna N.T."/>
            <person name="Payne S.M."/>
            <person name="Runyen-Janecky L.J."/>
            <person name="Zhou S."/>
            <person name="Schwartz D.C."/>
            <person name="Blattner F.R."/>
        </authorList>
    </citation>
    <scope>NUCLEOTIDE SEQUENCE [LARGE SCALE GENOMIC DNA]</scope>
    <source>
        <strain>ATCC 700930 / 2457T / Serotype 2a</strain>
    </source>
</reference>
<proteinExistence type="inferred from homology"/>
<sequence length="70" mass="7720">MSRKMTGIVKTFDRKSGKGFIIPSDGRKEVQVHISAFTPRDAEVLIPGLRVEFCRVNGLRGPTAANVYLS</sequence>
<protein>
    <recommendedName>
        <fullName>Cold shock-like protein CspH</fullName>
        <shortName>CSP-H</shortName>
    </recommendedName>
</protein>
<keyword id="KW-0010">Activator</keyword>
<keyword id="KW-0963">Cytoplasm</keyword>
<keyword id="KW-0238">DNA-binding</keyword>
<keyword id="KW-1185">Reference proteome</keyword>
<keyword id="KW-0804">Transcription</keyword>
<keyword id="KW-0805">Transcription regulation</keyword>
<comment type="subcellular location">
    <subcellularLocation>
        <location evidence="1">Cytoplasm</location>
    </subcellularLocation>
</comment>
<organism>
    <name type="scientific">Shigella flexneri</name>
    <dbReference type="NCBI Taxonomy" id="623"/>
    <lineage>
        <taxon>Bacteria</taxon>
        <taxon>Pseudomonadati</taxon>
        <taxon>Pseudomonadota</taxon>
        <taxon>Gammaproteobacteria</taxon>
        <taxon>Enterobacterales</taxon>
        <taxon>Enterobacteriaceae</taxon>
        <taxon>Shigella</taxon>
    </lineage>
</organism>
<feature type="chain" id="PRO_0000100269" description="Cold shock-like protein CspH">
    <location>
        <begin position="1"/>
        <end position="70"/>
    </location>
</feature>
<feature type="domain" description="CSD">
    <location>
        <begin position="7"/>
        <end position="67"/>
    </location>
</feature>
<name>CSPH_SHIFL</name>